<accession>Q8STB3</accession>
<reference key="1">
    <citation type="journal article" date="2001" name="Genome Res.">
        <title>Sequence and analysis of chromosome I of the amitochondriate intracellular parasite Encephalitozoon cuniculi (Microspora).</title>
        <authorList>
            <person name="Peyret P."/>
            <person name="Katinka M.D."/>
            <person name="Duprat S."/>
            <person name="Duffieux F."/>
            <person name="Barbe V."/>
            <person name="Barbazanges M."/>
            <person name="Weissenbach J."/>
            <person name="Saurin W."/>
            <person name="Vivares C.P."/>
        </authorList>
    </citation>
    <scope>NUCLEOTIDE SEQUENCE [LARGE SCALE GENOMIC DNA]</scope>
    <source>
        <strain>GB-M1</strain>
    </source>
</reference>
<reference key="2">
    <citation type="journal article" date="2001" name="Nature">
        <title>Genome sequence and gene compaction of the eukaryote parasite Encephalitozoon cuniculi.</title>
        <authorList>
            <person name="Katinka M.D."/>
            <person name="Duprat S."/>
            <person name="Cornillot E."/>
            <person name="Metenier G."/>
            <person name="Thomarat F."/>
            <person name="Prensier G."/>
            <person name="Barbe V."/>
            <person name="Peyretaillade E."/>
            <person name="Brottier P."/>
            <person name="Wincker P."/>
            <person name="Delbac F."/>
            <person name="El Alaoui H."/>
            <person name="Peyret P."/>
            <person name="Saurin W."/>
            <person name="Gouy M."/>
            <person name="Weissenbach J."/>
            <person name="Vivares C.P."/>
        </authorList>
    </citation>
    <scope>NUCLEOTIDE SEQUENCE [LARGE SCALE GENOMIC DNA]</scope>
    <source>
        <strain>GB-M1</strain>
    </source>
</reference>
<protein>
    <recommendedName>
        <fullName>UPF0329 protein ECU01_0120/ECU01_1490/ECU08_0050</fullName>
    </recommendedName>
</protein>
<name>Y112_ENCCU</name>
<organism>
    <name type="scientific">Encephalitozoon cuniculi (strain GB-M1)</name>
    <name type="common">Microsporidian parasite</name>
    <dbReference type="NCBI Taxonomy" id="284813"/>
    <lineage>
        <taxon>Eukaryota</taxon>
        <taxon>Fungi</taxon>
        <taxon>Fungi incertae sedis</taxon>
        <taxon>Microsporidia</taxon>
        <taxon>Unikaryonidae</taxon>
        <taxon>Encephalitozoon</taxon>
    </lineage>
</organism>
<sequence length="199" mass="23112">MSEEHHYKVHSRVLRWMKSAERIKRELDEGYEKKWRGKSVEEIKEQKKVHDIVEILELLKSKECDRFFFRTGKYMKGGSERWKMVANGILEEGGEKKVGKVEVGLFKGERGGSVVYHLMFRPTETERAGMVGGSSFGKGDDVDEIKKEESSDMSGFRYPPGVRCEMTSNGNEFRIEYRNPKNTSEVLRTLTILRIPEIR</sequence>
<gene>
    <name type="ordered locus">ECU01_0120</name>
</gene>
<gene>
    <name type="ordered locus">ECU01_1490</name>
</gene>
<gene>
    <name type="ordered locus">ECU08_0050</name>
</gene>
<evidence type="ECO:0000305" key="1"/>
<feature type="chain" id="PRO_0000223147" description="UPF0329 protein ECU01_0120/ECU01_1490/ECU08_0050">
    <location>
        <begin position="1"/>
        <end position="199"/>
    </location>
</feature>
<dbReference type="EMBL" id="AL391737">
    <property type="protein sequence ID" value="CAD24884.1"/>
    <property type="molecule type" value="Genomic_DNA"/>
</dbReference>
<dbReference type="EMBL" id="AL391737">
    <property type="protein sequence ID" value="CAD25020.1"/>
    <property type="molecule type" value="Genomic_DNA"/>
</dbReference>
<dbReference type="EMBL" id="AL590448">
    <property type="protein sequence ID" value="CAD26310.1"/>
    <property type="molecule type" value="Genomic_DNA"/>
</dbReference>
<dbReference type="RefSeq" id="NP_001402100.1">
    <property type="nucleotide sequence ID" value="NM_001415177.1"/>
</dbReference>
<dbReference type="RefSeq" id="NP_597134.1">
    <property type="nucleotide sequence ID" value="NM_001041743.1"/>
</dbReference>
<dbReference type="RefSeq" id="XP_965849.1">
    <property type="nucleotide sequence ID" value="XM_960756.1"/>
</dbReference>
<dbReference type="RefSeq" id="XP_965985.1">
    <property type="nucleotide sequence ID" value="XM_960892.1"/>
</dbReference>
<dbReference type="STRING" id="284813.Q8STB3"/>
<dbReference type="GeneID" id="859556"/>
<dbReference type="GeneID" id="860185"/>
<dbReference type="KEGG" id="ecu:ECU08_0050"/>
<dbReference type="VEuPathDB" id="MicrosporidiaDB:ECU01_0120"/>
<dbReference type="VEuPathDB" id="MicrosporidiaDB:ECU01_1490"/>
<dbReference type="VEuPathDB" id="MicrosporidiaDB:ECU08_0050"/>
<dbReference type="HOGENOM" id="CLU_090379_0_0_1"/>
<dbReference type="InParanoid" id="Q8STB3"/>
<dbReference type="OrthoDB" id="2200026at2759"/>
<dbReference type="Proteomes" id="UP000000819">
    <property type="component" value="Chromosome I"/>
</dbReference>
<dbReference type="Proteomes" id="UP000000819">
    <property type="component" value="Chromosome VIII"/>
</dbReference>
<dbReference type="InterPro" id="IPR011667">
    <property type="entry name" value="UPF0329"/>
</dbReference>
<dbReference type="Pfam" id="PF07753">
    <property type="entry name" value="DUF1609"/>
    <property type="match status" value="1"/>
</dbReference>
<proteinExistence type="inferred from homology"/>
<comment type="similarity">
    <text evidence="1">Belongs to the UPF0329 family.</text>
</comment>
<keyword id="KW-1185">Reference proteome</keyword>